<evidence type="ECO:0000250" key="1"/>
<evidence type="ECO:0000255" key="2"/>
<evidence type="ECO:0000305" key="3"/>
<protein>
    <recommendedName>
        <fullName>U14-lycotoxin-Ls1b</fullName>
    </recommendedName>
    <alternativeName>
        <fullName>Toxin-like structure LSTX-N4</fullName>
    </alternativeName>
</protein>
<reference key="1">
    <citation type="journal article" date="2010" name="Zoology">
        <title>Transcriptome analysis of the venom glands of the Chinese wolf spider Lycosa singoriensis.</title>
        <authorList>
            <person name="Zhang Y."/>
            <person name="Chen J."/>
            <person name="Tang X."/>
            <person name="Wang F."/>
            <person name="Jiang L."/>
            <person name="Xiong X."/>
            <person name="Wang M."/>
            <person name="Rong M."/>
            <person name="Liu Z."/>
            <person name="Liang S."/>
        </authorList>
    </citation>
    <scope>NUCLEOTIDE SEQUENCE [LARGE SCALE MRNA]</scope>
    <source>
        <tissue>Venom gland</tissue>
    </source>
</reference>
<comment type="function">
    <text evidence="1">Has antibacterial activity.</text>
</comment>
<comment type="subcellular location">
    <subcellularLocation>
        <location evidence="1">Secreted</location>
    </subcellularLocation>
</comment>
<comment type="tissue specificity">
    <text>Expressed by the venom gland.</text>
</comment>
<comment type="PTM">
    <text evidence="3">Contains 5 disulfide bonds.</text>
</comment>
<comment type="similarity">
    <text evidence="3">Belongs to the venom protein 11 family. 01 (wap-1) subfamily.</text>
</comment>
<feature type="signal peptide" evidence="2">
    <location>
        <begin position="1"/>
        <end position="20"/>
    </location>
</feature>
<feature type="chain" id="PRO_0000401880" description="U14-lycotoxin-Ls1b">
    <location>
        <begin position="21"/>
        <end position="87"/>
    </location>
</feature>
<feature type="domain" description="WAP">
    <location>
        <begin position="21"/>
        <end position="66"/>
    </location>
</feature>
<feature type="disulfide bond" evidence="1">
    <location>
        <begin position="24"/>
        <end position="54"/>
    </location>
</feature>
<feature type="disulfide bond" evidence="1">
    <location>
        <begin position="32"/>
        <end position="58"/>
    </location>
</feature>
<feature type="disulfide bond" evidence="1">
    <location>
        <begin position="41"/>
        <end position="53"/>
    </location>
</feature>
<feature type="disulfide bond" evidence="3">
    <location>
        <begin position="42"/>
        <end position="80"/>
    </location>
</feature>
<feature type="disulfide bond" evidence="1">
    <location>
        <begin position="47"/>
        <end position="62"/>
    </location>
</feature>
<accession>B6DD37</accession>
<proteinExistence type="evidence at transcript level"/>
<name>TXE04_LYCSI</name>
<dbReference type="EMBL" id="EU926121">
    <property type="protein sequence ID" value="ACI41453.1"/>
    <property type="molecule type" value="mRNA"/>
</dbReference>
<dbReference type="EMBL" id="FM864125">
    <property type="protein sequence ID" value="CAS03722.1"/>
    <property type="molecule type" value="mRNA"/>
</dbReference>
<dbReference type="SMR" id="B6DD37"/>
<dbReference type="ArachnoServer" id="AS001059">
    <property type="toxin name" value="U14-lycotoxin-Ls1b"/>
</dbReference>
<dbReference type="GO" id="GO:0005576">
    <property type="term" value="C:extracellular region"/>
    <property type="evidence" value="ECO:0007669"/>
    <property type="project" value="UniProtKB-SubCell"/>
</dbReference>
<dbReference type="GO" id="GO:0090729">
    <property type="term" value="F:toxin activity"/>
    <property type="evidence" value="ECO:0007669"/>
    <property type="project" value="UniProtKB-KW"/>
</dbReference>
<dbReference type="GO" id="GO:0042742">
    <property type="term" value="P:defense response to bacterium"/>
    <property type="evidence" value="ECO:0007669"/>
    <property type="project" value="UniProtKB-KW"/>
</dbReference>
<dbReference type="InterPro" id="IPR036645">
    <property type="entry name" value="Elafin-like_sf"/>
</dbReference>
<dbReference type="SUPFAM" id="SSF57256">
    <property type="entry name" value="Elafin-like"/>
    <property type="match status" value="1"/>
</dbReference>
<organism>
    <name type="scientific">Lycosa singoriensis</name>
    <name type="common">Wolf spider</name>
    <name type="synonym">Aranea singoriensis</name>
    <dbReference type="NCBI Taxonomy" id="434756"/>
    <lineage>
        <taxon>Eukaryota</taxon>
        <taxon>Metazoa</taxon>
        <taxon>Ecdysozoa</taxon>
        <taxon>Arthropoda</taxon>
        <taxon>Chelicerata</taxon>
        <taxon>Arachnida</taxon>
        <taxon>Araneae</taxon>
        <taxon>Araneomorphae</taxon>
        <taxon>Entelegynae</taxon>
        <taxon>Lycosoidea</taxon>
        <taxon>Lycosidae</taxon>
        <taxon>Lycosa</taxon>
    </lineage>
</organism>
<keyword id="KW-0044">Antibiotic</keyword>
<keyword id="KW-0929">Antimicrobial</keyword>
<keyword id="KW-1015">Disulfide bond</keyword>
<keyword id="KW-0964">Secreted</keyword>
<keyword id="KW-0732">Signal</keyword>
<keyword id="KW-0800">Toxin</keyword>
<sequence>MNSKVFAVLLLLALSTCVLSEKYCPTPRNTSCKKMNIRNNCCRDSDCTSNAFCCAEPCGNFCHKASDKPGGRRVDPNASCKTGYVYW</sequence>